<accession>P9WN57</accession>
<accession>L0TEP6</accession>
<accession>O06273</accession>
<accession>P64207</accession>
<comment type="catalytic activity">
    <reaction>
        <text>GTP + H2O = 7,8-dihydroneopterin 3'-triphosphate + formate + H(+)</text>
        <dbReference type="Rhea" id="RHEA:17473"/>
        <dbReference type="ChEBI" id="CHEBI:15377"/>
        <dbReference type="ChEBI" id="CHEBI:15378"/>
        <dbReference type="ChEBI" id="CHEBI:15740"/>
        <dbReference type="ChEBI" id="CHEBI:37565"/>
        <dbReference type="ChEBI" id="CHEBI:58462"/>
        <dbReference type="EC" id="3.5.4.16"/>
    </reaction>
</comment>
<comment type="pathway">
    <text>Cofactor biosynthesis; 7,8-dihydroneopterin triphosphate biosynthesis; 7,8-dihydroneopterin triphosphate from GTP: step 1/1.</text>
</comment>
<comment type="subunit">
    <text evidence="1">Toroid-shaped homodecamer, composed of two pentamers of five dimers.</text>
</comment>
<comment type="similarity">
    <text evidence="2">Belongs to the GTP cyclohydrolase I family.</text>
</comment>
<gene>
    <name type="primary">folE</name>
    <name type="synonym">gchA</name>
    <name type="ordered locus">Rv3609c</name>
    <name type="ORF">MTCY07H7B.13</name>
</gene>
<dbReference type="EC" id="3.5.4.16"/>
<dbReference type="EMBL" id="AL123456">
    <property type="protein sequence ID" value="CCP46432.1"/>
    <property type="molecule type" value="Genomic_DNA"/>
</dbReference>
<dbReference type="PIR" id="B70956">
    <property type="entry name" value="B70956"/>
</dbReference>
<dbReference type="RefSeq" id="NP_218126.1">
    <property type="nucleotide sequence ID" value="NC_000962.3"/>
</dbReference>
<dbReference type="RefSeq" id="WP_003899597.1">
    <property type="nucleotide sequence ID" value="NZ_NVQJ01000056.1"/>
</dbReference>
<dbReference type="SMR" id="P9WN57"/>
<dbReference type="FunCoup" id="P9WN57">
    <property type="interactions" value="255"/>
</dbReference>
<dbReference type="STRING" id="83332.Rv3609c"/>
<dbReference type="PaxDb" id="83332-Rv3609c"/>
<dbReference type="DNASU" id="885346"/>
<dbReference type="GeneID" id="45427595"/>
<dbReference type="GeneID" id="885346"/>
<dbReference type="KEGG" id="mtu:Rv3609c"/>
<dbReference type="KEGG" id="mtv:RVBD_3609c"/>
<dbReference type="TubercuList" id="Rv3609c"/>
<dbReference type="eggNOG" id="COG0302">
    <property type="taxonomic scope" value="Bacteria"/>
</dbReference>
<dbReference type="InParanoid" id="P9WN57"/>
<dbReference type="OrthoDB" id="9801207at2"/>
<dbReference type="PhylomeDB" id="P9WN57"/>
<dbReference type="UniPathway" id="UPA00848">
    <property type="reaction ID" value="UER00151"/>
</dbReference>
<dbReference type="Proteomes" id="UP000001584">
    <property type="component" value="Chromosome"/>
</dbReference>
<dbReference type="GO" id="GO:0005737">
    <property type="term" value="C:cytoplasm"/>
    <property type="evidence" value="ECO:0000318"/>
    <property type="project" value="GO_Central"/>
</dbReference>
<dbReference type="GO" id="GO:0005525">
    <property type="term" value="F:GTP binding"/>
    <property type="evidence" value="ECO:0000318"/>
    <property type="project" value="GO_Central"/>
</dbReference>
<dbReference type="GO" id="GO:0003934">
    <property type="term" value="F:GTP cyclohydrolase I activity"/>
    <property type="evidence" value="ECO:0000318"/>
    <property type="project" value="GO_Central"/>
</dbReference>
<dbReference type="GO" id="GO:0008270">
    <property type="term" value="F:zinc ion binding"/>
    <property type="evidence" value="ECO:0000318"/>
    <property type="project" value="GO_Central"/>
</dbReference>
<dbReference type="GO" id="GO:0006730">
    <property type="term" value="P:one-carbon metabolic process"/>
    <property type="evidence" value="ECO:0007669"/>
    <property type="project" value="UniProtKB-UniRule"/>
</dbReference>
<dbReference type="GO" id="GO:0006729">
    <property type="term" value="P:tetrahydrobiopterin biosynthetic process"/>
    <property type="evidence" value="ECO:0000318"/>
    <property type="project" value="GO_Central"/>
</dbReference>
<dbReference type="GO" id="GO:0046654">
    <property type="term" value="P:tetrahydrofolate biosynthetic process"/>
    <property type="evidence" value="ECO:0007669"/>
    <property type="project" value="UniProtKB-UniRule"/>
</dbReference>
<dbReference type="FunFam" id="1.10.286.10:FF:000001">
    <property type="entry name" value="GTP cyclohydrolase 1"/>
    <property type="match status" value="1"/>
</dbReference>
<dbReference type="FunFam" id="3.30.1130.10:FF:000001">
    <property type="entry name" value="GTP cyclohydrolase 1"/>
    <property type="match status" value="1"/>
</dbReference>
<dbReference type="Gene3D" id="1.10.286.10">
    <property type="match status" value="1"/>
</dbReference>
<dbReference type="Gene3D" id="3.30.1130.10">
    <property type="match status" value="1"/>
</dbReference>
<dbReference type="HAMAP" id="MF_00223">
    <property type="entry name" value="FolE"/>
    <property type="match status" value="1"/>
</dbReference>
<dbReference type="InterPro" id="IPR043133">
    <property type="entry name" value="GTP-CH-I_C/QueF"/>
</dbReference>
<dbReference type="InterPro" id="IPR043134">
    <property type="entry name" value="GTP-CH-I_N"/>
</dbReference>
<dbReference type="InterPro" id="IPR001474">
    <property type="entry name" value="GTP_CycHdrlase_I"/>
</dbReference>
<dbReference type="InterPro" id="IPR018234">
    <property type="entry name" value="GTP_CycHdrlase_I_CS"/>
</dbReference>
<dbReference type="InterPro" id="IPR020602">
    <property type="entry name" value="GTP_CycHdrlase_I_dom"/>
</dbReference>
<dbReference type="NCBIfam" id="TIGR00063">
    <property type="entry name" value="folE"/>
    <property type="match status" value="1"/>
</dbReference>
<dbReference type="NCBIfam" id="NF006825">
    <property type="entry name" value="PRK09347.1-2"/>
    <property type="match status" value="1"/>
</dbReference>
<dbReference type="NCBIfam" id="NF006826">
    <property type="entry name" value="PRK09347.1-3"/>
    <property type="match status" value="1"/>
</dbReference>
<dbReference type="PANTHER" id="PTHR11109:SF7">
    <property type="entry name" value="GTP CYCLOHYDROLASE 1"/>
    <property type="match status" value="1"/>
</dbReference>
<dbReference type="PANTHER" id="PTHR11109">
    <property type="entry name" value="GTP CYCLOHYDROLASE I"/>
    <property type="match status" value="1"/>
</dbReference>
<dbReference type="Pfam" id="PF01227">
    <property type="entry name" value="GTP_cyclohydroI"/>
    <property type="match status" value="1"/>
</dbReference>
<dbReference type="SUPFAM" id="SSF55620">
    <property type="entry name" value="Tetrahydrobiopterin biosynthesis enzymes-like"/>
    <property type="match status" value="1"/>
</dbReference>
<dbReference type="PROSITE" id="PS00859">
    <property type="entry name" value="GTP_CYCLOHYDROL_1_1"/>
    <property type="match status" value="1"/>
</dbReference>
<dbReference type="PROSITE" id="PS00860">
    <property type="entry name" value="GTP_CYCLOHYDROL_1_2"/>
    <property type="match status" value="1"/>
</dbReference>
<reference key="1">
    <citation type="journal article" date="1998" name="Nature">
        <title>Deciphering the biology of Mycobacterium tuberculosis from the complete genome sequence.</title>
        <authorList>
            <person name="Cole S.T."/>
            <person name="Brosch R."/>
            <person name="Parkhill J."/>
            <person name="Garnier T."/>
            <person name="Churcher C.M."/>
            <person name="Harris D.E."/>
            <person name="Gordon S.V."/>
            <person name="Eiglmeier K."/>
            <person name="Gas S."/>
            <person name="Barry C.E. III"/>
            <person name="Tekaia F."/>
            <person name="Badcock K."/>
            <person name="Basham D."/>
            <person name="Brown D."/>
            <person name="Chillingworth T."/>
            <person name="Connor R."/>
            <person name="Davies R.M."/>
            <person name="Devlin K."/>
            <person name="Feltwell T."/>
            <person name="Gentles S."/>
            <person name="Hamlin N."/>
            <person name="Holroyd S."/>
            <person name="Hornsby T."/>
            <person name="Jagels K."/>
            <person name="Krogh A."/>
            <person name="McLean J."/>
            <person name="Moule S."/>
            <person name="Murphy L.D."/>
            <person name="Oliver S."/>
            <person name="Osborne J."/>
            <person name="Quail M.A."/>
            <person name="Rajandream M.A."/>
            <person name="Rogers J."/>
            <person name="Rutter S."/>
            <person name="Seeger K."/>
            <person name="Skelton S."/>
            <person name="Squares S."/>
            <person name="Squares R."/>
            <person name="Sulston J.E."/>
            <person name="Taylor K."/>
            <person name="Whitehead S."/>
            <person name="Barrell B.G."/>
        </authorList>
    </citation>
    <scope>NUCLEOTIDE SEQUENCE [LARGE SCALE GENOMIC DNA]</scope>
    <source>
        <strain>ATCC 25618 / H37Rv</strain>
    </source>
</reference>
<reference key="2">
    <citation type="journal article" date="2011" name="Mol. Cell. Proteomics">
        <title>Proteogenomic analysis of Mycobacterium tuberculosis by high resolution mass spectrometry.</title>
        <authorList>
            <person name="Kelkar D.S."/>
            <person name="Kumar D."/>
            <person name="Kumar P."/>
            <person name="Balakrishnan L."/>
            <person name="Muthusamy B."/>
            <person name="Yadav A.K."/>
            <person name="Shrivastava P."/>
            <person name="Marimuthu A."/>
            <person name="Anand S."/>
            <person name="Sundaram H."/>
            <person name="Kingsbury R."/>
            <person name="Harsha H.C."/>
            <person name="Nair B."/>
            <person name="Prasad T.S."/>
            <person name="Chauhan D.S."/>
            <person name="Katoch K."/>
            <person name="Katoch V.M."/>
            <person name="Kumar P."/>
            <person name="Chaerkady R."/>
            <person name="Ramachandran S."/>
            <person name="Dash D."/>
            <person name="Pandey A."/>
        </authorList>
    </citation>
    <scope>IDENTIFICATION BY MASS SPECTROMETRY [LARGE SCALE ANALYSIS]</scope>
    <source>
        <strain>ATCC 25618 / H37Rv</strain>
    </source>
</reference>
<sequence length="202" mass="22395">MSQLDSRSASARIRVFDQQRAEAAVRELLYAIGEDPDRDGLVATPSRVARSYREMFAGLYTDPDSVLNTMFDEDHDELVLVKEIPMYSTCEHHLVAFHGVAHVGYIPGDDGRVTGLSKIARLVDLYAKRPQVQERLTSQIADALMKKLDPRGVIVVIEAEHLCMAMRGVRKPGSVTTTSAVRGLFKTNAASRAEALDLILRK</sequence>
<evidence type="ECO:0000250" key="1"/>
<evidence type="ECO:0000305" key="2"/>
<name>GCH1_MYCTU</name>
<feature type="chain" id="PRO_0000119423" description="GTP cyclohydrolase 1">
    <location>
        <begin position="1"/>
        <end position="202"/>
    </location>
</feature>
<feature type="binding site" evidence="1">
    <location>
        <position position="90"/>
    </location>
    <ligand>
        <name>Zn(2+)</name>
        <dbReference type="ChEBI" id="CHEBI:29105"/>
    </ligand>
</feature>
<feature type="binding site" evidence="1">
    <location>
        <position position="93"/>
    </location>
    <ligand>
        <name>Zn(2+)</name>
        <dbReference type="ChEBI" id="CHEBI:29105"/>
    </ligand>
</feature>
<feature type="binding site" evidence="1">
    <location>
        <position position="163"/>
    </location>
    <ligand>
        <name>Zn(2+)</name>
        <dbReference type="ChEBI" id="CHEBI:29105"/>
    </ligand>
</feature>
<organism>
    <name type="scientific">Mycobacterium tuberculosis (strain ATCC 25618 / H37Rv)</name>
    <dbReference type="NCBI Taxonomy" id="83332"/>
    <lineage>
        <taxon>Bacteria</taxon>
        <taxon>Bacillati</taxon>
        <taxon>Actinomycetota</taxon>
        <taxon>Actinomycetes</taxon>
        <taxon>Mycobacteriales</taxon>
        <taxon>Mycobacteriaceae</taxon>
        <taxon>Mycobacterium</taxon>
        <taxon>Mycobacterium tuberculosis complex</taxon>
    </lineage>
</organism>
<keyword id="KW-0342">GTP-binding</keyword>
<keyword id="KW-0378">Hydrolase</keyword>
<keyword id="KW-0479">Metal-binding</keyword>
<keyword id="KW-0547">Nucleotide-binding</keyword>
<keyword id="KW-0554">One-carbon metabolism</keyword>
<keyword id="KW-1185">Reference proteome</keyword>
<keyword id="KW-0862">Zinc</keyword>
<protein>
    <recommendedName>
        <fullName>GTP cyclohydrolase 1</fullName>
        <ecNumber>3.5.4.16</ecNumber>
    </recommendedName>
    <alternativeName>
        <fullName>GTP cyclohydrolase I</fullName>
        <shortName>GTP-CH-I</shortName>
    </alternativeName>
</protein>
<proteinExistence type="evidence at protein level"/>